<feature type="chain" id="PRO_0000283071" description="Ras-related protein Rab-18">
    <location>
        <begin position="1"/>
        <end position="203"/>
    </location>
</feature>
<feature type="propeptide" id="PRO_0000370760" description="Removed in mature form" evidence="5">
    <location>
        <begin position="204"/>
        <end position="206"/>
    </location>
</feature>
<feature type="short sequence motif" description="Switch 1" evidence="3">
    <location>
        <begin position="31"/>
        <end position="45"/>
    </location>
</feature>
<feature type="short sequence motif" description="Switch 2" evidence="3">
    <location>
        <begin position="63"/>
        <end position="80"/>
    </location>
</feature>
<feature type="binding site" evidence="4">
    <location>
        <position position="17"/>
    </location>
    <ligand>
        <name>GTP</name>
        <dbReference type="ChEBI" id="CHEBI:37565"/>
    </ligand>
</feature>
<feature type="binding site" evidence="4">
    <location>
        <position position="20"/>
    </location>
    <ligand>
        <name>GTP</name>
        <dbReference type="ChEBI" id="CHEBI:37565"/>
    </ligand>
</feature>
<feature type="binding site" evidence="4">
    <location>
        <position position="21"/>
    </location>
    <ligand>
        <name>GTP</name>
        <dbReference type="ChEBI" id="CHEBI:37565"/>
    </ligand>
</feature>
<feature type="binding site" evidence="4">
    <location>
        <position position="22"/>
    </location>
    <ligand>
        <name>GTP</name>
        <dbReference type="ChEBI" id="CHEBI:37565"/>
    </ligand>
</feature>
<feature type="binding site" evidence="4">
    <location>
        <position position="22"/>
    </location>
    <ligand>
        <name>Mg(2+)</name>
        <dbReference type="ChEBI" id="CHEBI:18420"/>
    </ligand>
</feature>
<feature type="binding site" evidence="4">
    <location>
        <position position="23"/>
    </location>
    <ligand>
        <name>GTP</name>
        <dbReference type="ChEBI" id="CHEBI:37565"/>
    </ligand>
</feature>
<feature type="binding site" evidence="4">
    <location>
        <position position="34"/>
    </location>
    <ligand>
        <name>GTP</name>
        <dbReference type="ChEBI" id="CHEBI:37565"/>
    </ligand>
</feature>
<feature type="binding site" evidence="4">
    <location>
        <position position="35"/>
    </location>
    <ligand>
        <name>GTP</name>
        <dbReference type="ChEBI" id="CHEBI:37565"/>
    </ligand>
</feature>
<feature type="binding site" evidence="4">
    <location>
        <position position="40"/>
    </location>
    <ligand>
        <name>GTP</name>
        <dbReference type="ChEBI" id="CHEBI:37565"/>
    </ligand>
</feature>
<feature type="binding site" evidence="4">
    <location>
        <position position="40"/>
    </location>
    <ligand>
        <name>Mg(2+)</name>
        <dbReference type="ChEBI" id="CHEBI:18420"/>
    </ligand>
</feature>
<feature type="binding site" evidence="4">
    <location>
        <position position="66"/>
    </location>
    <ligand>
        <name>GTP</name>
        <dbReference type="ChEBI" id="CHEBI:37565"/>
    </ligand>
</feature>
<feature type="binding site" evidence="4">
    <location>
        <position position="123"/>
    </location>
    <ligand>
        <name>GTP</name>
        <dbReference type="ChEBI" id="CHEBI:37565"/>
    </ligand>
</feature>
<feature type="binding site" evidence="4">
    <location>
        <position position="125"/>
    </location>
    <ligand>
        <name>GTP</name>
        <dbReference type="ChEBI" id="CHEBI:37565"/>
    </ligand>
</feature>
<feature type="binding site" evidence="4">
    <location>
        <position position="152"/>
    </location>
    <ligand>
        <name>GTP</name>
        <dbReference type="ChEBI" id="CHEBI:37565"/>
    </ligand>
</feature>
<feature type="modified residue" description="N-acetylmethionine" evidence="4">
    <location>
        <position position="1"/>
    </location>
</feature>
<feature type="modified residue" description="Phosphoserine" evidence="2">
    <location>
        <position position="144"/>
    </location>
</feature>
<feature type="modified residue" description="Cysteine methyl ester" evidence="5">
    <location>
        <position position="203"/>
    </location>
</feature>
<feature type="lipid moiety-binding region" description="S-palmitoyl cysteine" evidence="5">
    <location>
        <position position="199"/>
    </location>
</feature>
<feature type="lipid moiety-binding region" description="S-geranylgeranyl cysteine" evidence="1">
    <location>
        <position position="203"/>
    </location>
</feature>
<proteinExistence type="evidence at transcript level"/>
<evidence type="ECO:0000250" key="1"/>
<evidence type="ECO:0000250" key="2">
    <source>
        <dbReference type="UniProtKB" id="P35293"/>
    </source>
</evidence>
<evidence type="ECO:0000250" key="3">
    <source>
        <dbReference type="UniProtKB" id="P62820"/>
    </source>
</evidence>
<evidence type="ECO:0000250" key="4">
    <source>
        <dbReference type="UniProtKB" id="Q9NP72"/>
    </source>
</evidence>
<evidence type="ECO:0000255" key="5"/>
<evidence type="ECO:0000305" key="6"/>
<protein>
    <recommendedName>
        <fullName>Ras-related protein Rab-18</fullName>
        <ecNumber evidence="4">3.6.5.2</ecNumber>
    </recommendedName>
</protein>
<organism>
    <name type="scientific">Bos taurus</name>
    <name type="common">Bovine</name>
    <dbReference type="NCBI Taxonomy" id="9913"/>
    <lineage>
        <taxon>Eukaryota</taxon>
        <taxon>Metazoa</taxon>
        <taxon>Chordata</taxon>
        <taxon>Craniata</taxon>
        <taxon>Vertebrata</taxon>
        <taxon>Euteleostomi</taxon>
        <taxon>Mammalia</taxon>
        <taxon>Eutheria</taxon>
        <taxon>Laurasiatheria</taxon>
        <taxon>Artiodactyla</taxon>
        <taxon>Ruminantia</taxon>
        <taxon>Pecora</taxon>
        <taxon>Bovidae</taxon>
        <taxon>Bovinae</taxon>
        <taxon>Bos</taxon>
    </lineage>
</organism>
<keyword id="KW-0007">Acetylation</keyword>
<keyword id="KW-1003">Cell membrane</keyword>
<keyword id="KW-0217">Developmental protein</keyword>
<keyword id="KW-0256">Endoplasmic reticulum</keyword>
<keyword id="KW-0333">Golgi apparatus</keyword>
<keyword id="KW-0342">GTP-binding</keyword>
<keyword id="KW-0378">Hydrolase</keyword>
<keyword id="KW-0551">Lipid droplet</keyword>
<keyword id="KW-0449">Lipoprotein</keyword>
<keyword id="KW-0460">Magnesium</keyword>
<keyword id="KW-0472">Membrane</keyword>
<keyword id="KW-0479">Metal-binding</keyword>
<keyword id="KW-0488">Methylation</keyword>
<keyword id="KW-0547">Nucleotide-binding</keyword>
<keyword id="KW-0564">Palmitate</keyword>
<keyword id="KW-0597">Phosphoprotein</keyword>
<keyword id="KW-0636">Prenylation</keyword>
<keyword id="KW-0653">Protein transport</keyword>
<keyword id="KW-1185">Reference proteome</keyword>
<keyword id="KW-0813">Transport</keyword>
<name>RAB18_BOVIN</name>
<accession>Q0IIG8</accession>
<sequence>MDEDVLTTLKILIIGESGVGKSSLLLRFTDDTFDPELAATIGVDFKVKTISVDGNKAKLAIWDTAGQERFRTLTPSYYRGAQGVILVYDVTRRDTFVKLDNWLNELETYCTRNDIVNMLVGNKIDKENREVDRNEGLKFARKHSMLFIEASAKTCDGVQCAFEELVEKIIQTPGLWESENQNKGVKLTHREEGQGGGACGGYCSVL</sequence>
<dbReference type="EC" id="3.6.5.2" evidence="4"/>
<dbReference type="EMBL" id="BC122650">
    <property type="protein sequence ID" value="AAI22651.1"/>
    <property type="molecule type" value="mRNA"/>
</dbReference>
<dbReference type="RefSeq" id="NP_001068967.1">
    <property type="nucleotide sequence ID" value="NM_001075499.1"/>
</dbReference>
<dbReference type="SMR" id="Q0IIG8"/>
<dbReference type="BioGRID" id="167791">
    <property type="interactions" value="1"/>
</dbReference>
<dbReference type="FunCoup" id="Q0IIG8">
    <property type="interactions" value="3453"/>
</dbReference>
<dbReference type="STRING" id="9913.ENSBTAP00000013018"/>
<dbReference type="PaxDb" id="9913-ENSBTAP00000013018"/>
<dbReference type="PeptideAtlas" id="Q0IIG8"/>
<dbReference type="GeneID" id="511160"/>
<dbReference type="KEGG" id="bta:511160"/>
<dbReference type="CTD" id="22931"/>
<dbReference type="eggNOG" id="KOG0080">
    <property type="taxonomic scope" value="Eukaryota"/>
</dbReference>
<dbReference type="HOGENOM" id="CLU_041217_10_7_1"/>
<dbReference type="InParanoid" id="Q0IIG8"/>
<dbReference type="OrthoDB" id="9989112at2759"/>
<dbReference type="TreeFam" id="TF313448"/>
<dbReference type="Proteomes" id="UP000009136">
    <property type="component" value="Unplaced"/>
</dbReference>
<dbReference type="GO" id="GO:0016324">
    <property type="term" value="C:apical plasma membrane"/>
    <property type="evidence" value="ECO:0007669"/>
    <property type="project" value="UniProtKB-SubCell"/>
</dbReference>
<dbReference type="GO" id="GO:0033106">
    <property type="term" value="C:cis-Golgi network membrane"/>
    <property type="evidence" value="ECO:0000250"/>
    <property type="project" value="UniProtKB"/>
</dbReference>
<dbReference type="GO" id="GO:0005789">
    <property type="term" value="C:endoplasmic reticulum membrane"/>
    <property type="evidence" value="ECO:0000250"/>
    <property type="project" value="UniProtKB"/>
</dbReference>
<dbReference type="GO" id="GO:0005811">
    <property type="term" value="C:lipid droplet"/>
    <property type="evidence" value="ECO:0000250"/>
    <property type="project" value="UniProtKB"/>
</dbReference>
<dbReference type="GO" id="GO:0019003">
    <property type="term" value="F:GDP binding"/>
    <property type="evidence" value="ECO:0000250"/>
    <property type="project" value="UniProtKB"/>
</dbReference>
<dbReference type="GO" id="GO:0005525">
    <property type="term" value="F:GTP binding"/>
    <property type="evidence" value="ECO:0000318"/>
    <property type="project" value="GO_Central"/>
</dbReference>
<dbReference type="GO" id="GO:0003924">
    <property type="term" value="F:GTPase activity"/>
    <property type="evidence" value="ECO:0000250"/>
    <property type="project" value="UniProtKB"/>
</dbReference>
<dbReference type="GO" id="GO:0007420">
    <property type="term" value="P:brain development"/>
    <property type="evidence" value="ECO:0000250"/>
    <property type="project" value="UniProtKB"/>
</dbReference>
<dbReference type="GO" id="GO:0001654">
    <property type="term" value="P:eye development"/>
    <property type="evidence" value="ECO:0000250"/>
    <property type="project" value="UniProtKB"/>
</dbReference>
<dbReference type="GO" id="GO:0015031">
    <property type="term" value="P:protein transport"/>
    <property type="evidence" value="ECO:0007669"/>
    <property type="project" value="UniProtKB-KW"/>
</dbReference>
<dbReference type="GO" id="GO:0016192">
    <property type="term" value="P:vesicle-mediated transport"/>
    <property type="evidence" value="ECO:0000318"/>
    <property type="project" value="GO_Central"/>
</dbReference>
<dbReference type="CDD" id="cd01863">
    <property type="entry name" value="Rab18"/>
    <property type="match status" value="1"/>
</dbReference>
<dbReference type="FunFam" id="3.40.50.300:FF:000430">
    <property type="entry name" value="Probable Ras-related protein Rab-18"/>
    <property type="match status" value="1"/>
</dbReference>
<dbReference type="Gene3D" id="3.40.50.300">
    <property type="entry name" value="P-loop containing nucleotide triphosphate hydrolases"/>
    <property type="match status" value="1"/>
</dbReference>
<dbReference type="InterPro" id="IPR027417">
    <property type="entry name" value="P-loop_NTPase"/>
</dbReference>
<dbReference type="InterPro" id="IPR050227">
    <property type="entry name" value="Rab"/>
</dbReference>
<dbReference type="InterPro" id="IPR025662">
    <property type="entry name" value="Sigma_54_int_dom_ATP-bd_1"/>
</dbReference>
<dbReference type="InterPro" id="IPR005225">
    <property type="entry name" value="Small_GTP-bd"/>
</dbReference>
<dbReference type="InterPro" id="IPR001806">
    <property type="entry name" value="Small_GTPase"/>
</dbReference>
<dbReference type="NCBIfam" id="TIGR00231">
    <property type="entry name" value="small_GTP"/>
    <property type="match status" value="1"/>
</dbReference>
<dbReference type="PANTHER" id="PTHR47977">
    <property type="entry name" value="RAS-RELATED PROTEIN RAB"/>
    <property type="match status" value="1"/>
</dbReference>
<dbReference type="Pfam" id="PF00071">
    <property type="entry name" value="Ras"/>
    <property type="match status" value="1"/>
</dbReference>
<dbReference type="PRINTS" id="PR00449">
    <property type="entry name" value="RASTRNSFRMNG"/>
</dbReference>
<dbReference type="SMART" id="SM00177">
    <property type="entry name" value="ARF"/>
    <property type="match status" value="1"/>
</dbReference>
<dbReference type="SMART" id="SM00175">
    <property type="entry name" value="RAB"/>
    <property type="match status" value="1"/>
</dbReference>
<dbReference type="SMART" id="SM00176">
    <property type="entry name" value="RAN"/>
    <property type="match status" value="1"/>
</dbReference>
<dbReference type="SMART" id="SM00173">
    <property type="entry name" value="RAS"/>
    <property type="match status" value="1"/>
</dbReference>
<dbReference type="SMART" id="SM00174">
    <property type="entry name" value="RHO"/>
    <property type="match status" value="1"/>
</dbReference>
<dbReference type="SUPFAM" id="SSF52540">
    <property type="entry name" value="P-loop containing nucleoside triphosphate hydrolases"/>
    <property type="match status" value="1"/>
</dbReference>
<dbReference type="PROSITE" id="PS51419">
    <property type="entry name" value="RAB"/>
    <property type="match status" value="1"/>
</dbReference>
<comment type="function">
    <text evidence="2 4">The small GTPases Rab are key regulators of intracellular membrane trafficking, from the formation of transport vesicles to their fusion with membranes (By similarity). Rabs cycle between an inactive GDP-bound form and an active GTP-bound form that is able to recruit to membranes different sets of downstream effectors directly responsible for vesicle formation, movement, tethering and fusion (By similarity). RAB18 is required for the localization of ZFYVE1 to lipid droplets and for its function in mediating the formation of endoplasmic reticulum-lipid droplets (ER-LD) contacts (By similarity). Also required for maintaining endoplasmic reticulum structure (By similarity). Plays a role in apical endocytosis/recycling (By similarity). Plays a key role in eye and brain development and neurodegeneration (By similarity).</text>
</comment>
<comment type="catalytic activity">
    <reaction evidence="4">
        <text>GTP + H2O = GDP + phosphate + H(+)</text>
        <dbReference type="Rhea" id="RHEA:19669"/>
        <dbReference type="ChEBI" id="CHEBI:15377"/>
        <dbReference type="ChEBI" id="CHEBI:15378"/>
        <dbReference type="ChEBI" id="CHEBI:37565"/>
        <dbReference type="ChEBI" id="CHEBI:43474"/>
        <dbReference type="ChEBI" id="CHEBI:58189"/>
        <dbReference type="EC" id="3.6.5.2"/>
    </reaction>
    <physiologicalReaction direction="left-to-right" evidence="4">
        <dbReference type="Rhea" id="RHEA:19670"/>
    </physiologicalReaction>
</comment>
<comment type="cofactor">
    <cofactor evidence="4">
        <name>Mg(2+)</name>
        <dbReference type="ChEBI" id="CHEBI:18420"/>
    </cofactor>
</comment>
<comment type="activity regulation">
    <text evidence="4">Regulated by guanine nucleotide exchange factors (GEFs) which promote the exchange of bound GDP for free GTP. Regulated by GTPase activating proteins (GAPs) which increase the GTP hydrolysis activity at the ER membrane. Inhibited by GDP dissociation inhibitors (GDIs) which prevent Rab-GDP dissociation.</text>
</comment>
<comment type="subunit">
    <text evidence="4">Interacts (in GTP-bound form) with ZFYVE1 (By similarity). Interacts with ZW10 and this interaction is enhanced in the presence of ZFYVE1 (By similarity). Interacts with BSCL2 (By similarity).</text>
</comment>
<comment type="subcellular location">
    <subcellularLocation>
        <location evidence="4">Endoplasmic reticulum membrane</location>
    </subcellularLocation>
    <subcellularLocation>
        <location evidence="4">Golgi apparatus</location>
        <location evidence="4">cis-Golgi network membrane</location>
    </subcellularLocation>
    <subcellularLocation>
        <location evidence="4">Lipid droplet</location>
    </subcellularLocation>
    <subcellularLocation>
        <location evidence="2">Apical cell membrane</location>
    </subcellularLocation>
</comment>
<comment type="domain">
    <text evidence="3">Switch 1, switch 2 and the interswitch regions are characteristic of Rab GTPases and mediate the interactions with Rab downstream effectors. The switch regions undergo conformational changes upon nucleotide binding which drive interaction with specific sets of effector proteins, with most effectors only binding to GTP-bound Rab.</text>
</comment>
<comment type="similarity">
    <text evidence="6">Belongs to the small GTPase superfamily. Rab family.</text>
</comment>
<gene>
    <name type="primary">RAB18</name>
</gene>
<reference key="1">
    <citation type="submission" date="2006-08" db="EMBL/GenBank/DDBJ databases">
        <authorList>
            <consortium name="NIH - Mammalian Gene Collection (MGC) project"/>
        </authorList>
    </citation>
    <scope>NUCLEOTIDE SEQUENCE [LARGE SCALE MRNA]</scope>
    <source>
        <strain>Hereford</strain>
        <tissue>Basal ganglia</tissue>
    </source>
</reference>